<organism>
    <name type="scientific">Bifidobacterium animalis subsp. lactis (strain AD011)</name>
    <dbReference type="NCBI Taxonomy" id="442563"/>
    <lineage>
        <taxon>Bacteria</taxon>
        <taxon>Bacillati</taxon>
        <taxon>Actinomycetota</taxon>
        <taxon>Actinomycetes</taxon>
        <taxon>Bifidobacteriales</taxon>
        <taxon>Bifidobacteriaceae</taxon>
        <taxon>Bifidobacterium</taxon>
    </lineage>
</organism>
<reference key="1">
    <citation type="journal article" date="2009" name="J. Bacteriol.">
        <title>Genome sequence of the probiotic bacterium Bifidobacterium animalis subsp. lactis AD011.</title>
        <authorList>
            <person name="Kim J.F."/>
            <person name="Jeong H."/>
            <person name="Yu D.S."/>
            <person name="Choi S.-H."/>
            <person name="Hur C.-G."/>
            <person name="Park M.-S."/>
            <person name="Yoon S.H."/>
            <person name="Kim D.-W."/>
            <person name="Ji G.E."/>
            <person name="Park H.-S."/>
            <person name="Oh T.K."/>
        </authorList>
    </citation>
    <scope>NUCLEOTIDE SEQUENCE [LARGE SCALE GENOMIC DNA]</scope>
    <source>
        <strain>AD011</strain>
    </source>
</reference>
<comment type="function">
    <text evidence="1">Catalyzes the attachment of tyrosine to tRNA(Tyr) in a two-step reaction: tyrosine is first activated by ATP to form Tyr-AMP and then transferred to the acceptor end of tRNA(Tyr).</text>
</comment>
<comment type="catalytic activity">
    <reaction evidence="1">
        <text>tRNA(Tyr) + L-tyrosine + ATP = L-tyrosyl-tRNA(Tyr) + AMP + diphosphate + H(+)</text>
        <dbReference type="Rhea" id="RHEA:10220"/>
        <dbReference type="Rhea" id="RHEA-COMP:9706"/>
        <dbReference type="Rhea" id="RHEA-COMP:9707"/>
        <dbReference type="ChEBI" id="CHEBI:15378"/>
        <dbReference type="ChEBI" id="CHEBI:30616"/>
        <dbReference type="ChEBI" id="CHEBI:33019"/>
        <dbReference type="ChEBI" id="CHEBI:58315"/>
        <dbReference type="ChEBI" id="CHEBI:78442"/>
        <dbReference type="ChEBI" id="CHEBI:78536"/>
        <dbReference type="ChEBI" id="CHEBI:456215"/>
        <dbReference type="EC" id="6.1.1.1"/>
    </reaction>
</comment>
<comment type="subunit">
    <text evidence="1">Homodimer.</text>
</comment>
<comment type="subcellular location">
    <subcellularLocation>
        <location evidence="1">Cytoplasm</location>
    </subcellularLocation>
</comment>
<comment type="similarity">
    <text evidence="1">Belongs to the class-I aminoacyl-tRNA synthetase family. TyrS type 1 subfamily.</text>
</comment>
<name>SYY_BIFA0</name>
<evidence type="ECO:0000255" key="1">
    <source>
        <dbReference type="HAMAP-Rule" id="MF_02006"/>
    </source>
</evidence>
<proteinExistence type="inferred from homology"/>
<sequence>MAHVIDFKEAGFDSVLDELEWRGLISQSTDRDRLAHTLNGEPVHYYCGFDPTAPSLHIGNLVQLIIMRHLQEAGHHPIALVGGATGLIGDPRQSGERILNPKDIVEQWCERLRIQIGGILEQEGSNPVTFVSNYDWTATMNVLDFLRDIGKNFRVGTMISKDIVARRLNSEEGISFTEFSYQVLQGNDYLYLYDHYDCVLELGGSDQWGNLTSGLDLIHKVRGVNVNVMASPIITDANGKKFGKSEGNAVWLDPNMLSVYKFYQFWLNRPDVEMASLLKAFTFLPKAEIERLVEATDTNPGAREAQRVLAWEVTSLVHGDEPTRKAIDASASLFGRGGDLADIDLETLESVLDGLKVENEAGEKVFAQALPGDRIAQAGVSAGLFKSISEARKTIKSGGVYVNNVRVEDEEQLLGDGDFLKGRFVVLRRGKKALGVVARS</sequence>
<protein>
    <recommendedName>
        <fullName evidence="1">Tyrosine--tRNA ligase</fullName>
        <ecNumber evidence="1">6.1.1.1</ecNumber>
    </recommendedName>
    <alternativeName>
        <fullName evidence="1">Tyrosyl-tRNA synthetase</fullName>
        <shortName evidence="1">TyrRS</shortName>
    </alternativeName>
</protein>
<gene>
    <name evidence="1" type="primary">tyrS</name>
    <name type="ordered locus">BLA_1255</name>
</gene>
<feature type="chain" id="PRO_1000189258" description="Tyrosine--tRNA ligase">
    <location>
        <begin position="1"/>
        <end position="440"/>
    </location>
</feature>
<feature type="domain" description="S4 RNA-binding" evidence="1">
    <location>
        <begin position="373"/>
        <end position="430"/>
    </location>
</feature>
<feature type="short sequence motif" description="'HIGH' region">
    <location>
        <begin position="51"/>
        <end position="60"/>
    </location>
</feature>
<feature type="short sequence motif" description="'KMSKS' region">
    <location>
        <begin position="241"/>
        <end position="245"/>
    </location>
</feature>
<feature type="binding site" evidence="1">
    <location>
        <position position="46"/>
    </location>
    <ligand>
        <name>L-tyrosine</name>
        <dbReference type="ChEBI" id="CHEBI:58315"/>
    </ligand>
</feature>
<feature type="binding site" evidence="1">
    <location>
        <position position="181"/>
    </location>
    <ligand>
        <name>L-tyrosine</name>
        <dbReference type="ChEBI" id="CHEBI:58315"/>
    </ligand>
</feature>
<feature type="binding site" evidence="1">
    <location>
        <position position="185"/>
    </location>
    <ligand>
        <name>L-tyrosine</name>
        <dbReference type="ChEBI" id="CHEBI:58315"/>
    </ligand>
</feature>
<feature type="binding site" evidence="1">
    <location>
        <position position="244"/>
    </location>
    <ligand>
        <name>ATP</name>
        <dbReference type="ChEBI" id="CHEBI:30616"/>
    </ligand>
</feature>
<accession>B8DU64</accession>
<keyword id="KW-0030">Aminoacyl-tRNA synthetase</keyword>
<keyword id="KW-0067">ATP-binding</keyword>
<keyword id="KW-0963">Cytoplasm</keyword>
<keyword id="KW-0436">Ligase</keyword>
<keyword id="KW-0547">Nucleotide-binding</keyword>
<keyword id="KW-0648">Protein biosynthesis</keyword>
<keyword id="KW-1185">Reference proteome</keyword>
<keyword id="KW-0694">RNA-binding</keyword>
<dbReference type="EC" id="6.1.1.1" evidence="1"/>
<dbReference type="EMBL" id="CP001213">
    <property type="protein sequence ID" value="ACL29543.1"/>
    <property type="molecule type" value="Genomic_DNA"/>
</dbReference>
<dbReference type="RefSeq" id="WP_004218069.1">
    <property type="nucleotide sequence ID" value="NC_011835.1"/>
</dbReference>
<dbReference type="SMR" id="B8DU64"/>
<dbReference type="STRING" id="442563.BLA_1255"/>
<dbReference type="GeneID" id="29696579"/>
<dbReference type="KEGG" id="bla:BLA_1255"/>
<dbReference type="HOGENOM" id="CLU_024003_0_3_11"/>
<dbReference type="Proteomes" id="UP000002456">
    <property type="component" value="Chromosome"/>
</dbReference>
<dbReference type="GO" id="GO:0005829">
    <property type="term" value="C:cytosol"/>
    <property type="evidence" value="ECO:0007669"/>
    <property type="project" value="TreeGrafter"/>
</dbReference>
<dbReference type="GO" id="GO:0005524">
    <property type="term" value="F:ATP binding"/>
    <property type="evidence" value="ECO:0007669"/>
    <property type="project" value="UniProtKB-UniRule"/>
</dbReference>
<dbReference type="GO" id="GO:0003723">
    <property type="term" value="F:RNA binding"/>
    <property type="evidence" value="ECO:0007669"/>
    <property type="project" value="UniProtKB-KW"/>
</dbReference>
<dbReference type="GO" id="GO:0004831">
    <property type="term" value="F:tyrosine-tRNA ligase activity"/>
    <property type="evidence" value="ECO:0007669"/>
    <property type="project" value="UniProtKB-UniRule"/>
</dbReference>
<dbReference type="GO" id="GO:0006437">
    <property type="term" value="P:tyrosyl-tRNA aminoacylation"/>
    <property type="evidence" value="ECO:0007669"/>
    <property type="project" value="UniProtKB-UniRule"/>
</dbReference>
<dbReference type="CDD" id="cd00165">
    <property type="entry name" value="S4"/>
    <property type="match status" value="1"/>
</dbReference>
<dbReference type="CDD" id="cd00805">
    <property type="entry name" value="TyrRS_core"/>
    <property type="match status" value="1"/>
</dbReference>
<dbReference type="FunFam" id="1.10.240.10:FF:000001">
    <property type="entry name" value="Tyrosine--tRNA ligase"/>
    <property type="match status" value="1"/>
</dbReference>
<dbReference type="Gene3D" id="3.40.50.620">
    <property type="entry name" value="HUPs"/>
    <property type="match status" value="1"/>
</dbReference>
<dbReference type="Gene3D" id="3.10.290.10">
    <property type="entry name" value="RNA-binding S4 domain"/>
    <property type="match status" value="1"/>
</dbReference>
<dbReference type="Gene3D" id="1.10.240.10">
    <property type="entry name" value="Tyrosyl-Transfer RNA Synthetase"/>
    <property type="match status" value="1"/>
</dbReference>
<dbReference type="HAMAP" id="MF_02006">
    <property type="entry name" value="Tyr_tRNA_synth_type1"/>
    <property type="match status" value="1"/>
</dbReference>
<dbReference type="InterPro" id="IPR001412">
    <property type="entry name" value="aa-tRNA-synth_I_CS"/>
</dbReference>
<dbReference type="InterPro" id="IPR002305">
    <property type="entry name" value="aa-tRNA-synth_Ic"/>
</dbReference>
<dbReference type="InterPro" id="IPR014729">
    <property type="entry name" value="Rossmann-like_a/b/a_fold"/>
</dbReference>
<dbReference type="InterPro" id="IPR002942">
    <property type="entry name" value="S4_RNA-bd"/>
</dbReference>
<dbReference type="InterPro" id="IPR036986">
    <property type="entry name" value="S4_RNA-bd_sf"/>
</dbReference>
<dbReference type="InterPro" id="IPR054608">
    <property type="entry name" value="SYY-like_C"/>
</dbReference>
<dbReference type="InterPro" id="IPR002307">
    <property type="entry name" value="Tyr-tRNA-ligase"/>
</dbReference>
<dbReference type="InterPro" id="IPR024088">
    <property type="entry name" value="Tyr-tRNA-ligase_bac-type"/>
</dbReference>
<dbReference type="InterPro" id="IPR024107">
    <property type="entry name" value="Tyr-tRNA-ligase_bac_1"/>
</dbReference>
<dbReference type="NCBIfam" id="TIGR00234">
    <property type="entry name" value="tyrS"/>
    <property type="match status" value="1"/>
</dbReference>
<dbReference type="PANTHER" id="PTHR11766:SF0">
    <property type="entry name" value="TYROSINE--TRNA LIGASE, MITOCHONDRIAL"/>
    <property type="match status" value="1"/>
</dbReference>
<dbReference type="PANTHER" id="PTHR11766">
    <property type="entry name" value="TYROSYL-TRNA SYNTHETASE"/>
    <property type="match status" value="1"/>
</dbReference>
<dbReference type="Pfam" id="PF22421">
    <property type="entry name" value="SYY_C-terminal"/>
    <property type="match status" value="1"/>
</dbReference>
<dbReference type="Pfam" id="PF00579">
    <property type="entry name" value="tRNA-synt_1b"/>
    <property type="match status" value="1"/>
</dbReference>
<dbReference type="PRINTS" id="PR01040">
    <property type="entry name" value="TRNASYNTHTYR"/>
</dbReference>
<dbReference type="SMART" id="SM00363">
    <property type="entry name" value="S4"/>
    <property type="match status" value="1"/>
</dbReference>
<dbReference type="SUPFAM" id="SSF55174">
    <property type="entry name" value="Alpha-L RNA-binding motif"/>
    <property type="match status" value="1"/>
</dbReference>
<dbReference type="SUPFAM" id="SSF52374">
    <property type="entry name" value="Nucleotidylyl transferase"/>
    <property type="match status" value="1"/>
</dbReference>
<dbReference type="PROSITE" id="PS00178">
    <property type="entry name" value="AA_TRNA_LIGASE_I"/>
    <property type="match status" value="1"/>
</dbReference>
<dbReference type="PROSITE" id="PS50889">
    <property type="entry name" value="S4"/>
    <property type="match status" value="1"/>
</dbReference>